<protein>
    <recommendedName>
        <fullName evidence="4">Kunitz-type serine protease inhibitor conotoxin Cal9.1a</fullName>
    </recommendedName>
    <alternativeName>
        <fullName evidence="5">Conkunitzin-Cal9.1a</fullName>
    </alternativeName>
</protein>
<evidence type="ECO:0000250" key="1"/>
<evidence type="ECO:0000255" key="2"/>
<evidence type="ECO:0000255" key="3">
    <source>
        <dbReference type="PROSITE-ProRule" id="PRU00031"/>
    </source>
</evidence>
<evidence type="ECO:0000303" key="4">
    <source>
    </source>
</evidence>
<evidence type="ECO:0000305" key="5"/>
<evidence type="ECO:0000305" key="6">
    <source>
    </source>
</evidence>
<reference key="1">
    <citation type="journal article" date="2011" name="Toxicon">
        <title>Diversity of conotoxin types from Conus californicus reflects a diversity of prey types and a novel evolutionary history.</title>
        <authorList>
            <person name="Elliger C.A."/>
            <person name="Richmond T.A."/>
            <person name="Lebaric Z.N."/>
            <person name="Pierce N.T."/>
            <person name="Sweedler J.V."/>
            <person name="Gilly W.F."/>
        </authorList>
    </citation>
    <scope>NUCLEOTIDE SEQUENCE [MRNA]</scope>
    <source>
        <tissue>Venom duct</tissue>
    </source>
</reference>
<feature type="signal peptide" evidence="2">
    <location>
        <begin position="1"/>
        <end position="16"/>
    </location>
</feature>
<feature type="propeptide" id="PRO_0000414945" evidence="6">
    <location>
        <begin position="17"/>
        <end position="20"/>
    </location>
</feature>
<feature type="peptide" id="PRO_0000414946" description="Kunitz-type serine protease inhibitor conotoxin Cal9.1a" evidence="6">
    <location>
        <begin position="23"/>
        <end position="78"/>
    </location>
</feature>
<feature type="domain" description="BPTI/Kunitz inhibitor" evidence="3">
    <location>
        <begin position="25"/>
        <end position="75"/>
    </location>
</feature>
<feature type="site" description="Reactive bond for chymotrypsin" evidence="1">
    <location>
        <begin position="35"/>
        <end position="36"/>
    </location>
</feature>
<feature type="disulfide bond" evidence="3">
    <location>
        <begin position="25"/>
        <end position="75"/>
    </location>
</feature>
<feature type="disulfide bond" evidence="3">
    <location>
        <begin position="34"/>
        <end position="58"/>
    </location>
</feature>
<feature type="disulfide bond" evidence="3">
    <location>
        <begin position="50"/>
        <end position="71"/>
    </location>
</feature>
<organism>
    <name type="scientific">Californiconus californicus</name>
    <name type="common">California cone</name>
    <name type="synonym">Conus californicus</name>
    <dbReference type="NCBI Taxonomy" id="1736779"/>
    <lineage>
        <taxon>Eukaryota</taxon>
        <taxon>Metazoa</taxon>
        <taxon>Spiralia</taxon>
        <taxon>Lophotrochozoa</taxon>
        <taxon>Mollusca</taxon>
        <taxon>Gastropoda</taxon>
        <taxon>Caenogastropoda</taxon>
        <taxon>Neogastropoda</taxon>
        <taxon>Conoidea</taxon>
        <taxon>Conidae</taxon>
        <taxon>Californiconus</taxon>
    </lineage>
</organism>
<name>VKT1A_CONCL</name>
<accession>D2Y488</accession>
<dbReference type="EMBL" id="GU306152">
    <property type="protein sequence ID" value="ADB04231.1"/>
    <property type="molecule type" value="mRNA"/>
</dbReference>
<dbReference type="SMR" id="D2Y488"/>
<dbReference type="ConoServer" id="3962">
    <property type="toxin name" value="Conkunitzin-Cal9.1a precursor"/>
</dbReference>
<dbReference type="GO" id="GO:0005576">
    <property type="term" value="C:extracellular region"/>
    <property type="evidence" value="ECO:0007669"/>
    <property type="project" value="UniProtKB-SubCell"/>
</dbReference>
<dbReference type="GO" id="GO:0004867">
    <property type="term" value="F:serine-type endopeptidase inhibitor activity"/>
    <property type="evidence" value="ECO:0007669"/>
    <property type="project" value="UniProtKB-KW"/>
</dbReference>
<dbReference type="GO" id="GO:0090729">
    <property type="term" value="F:toxin activity"/>
    <property type="evidence" value="ECO:0007669"/>
    <property type="project" value="UniProtKB-KW"/>
</dbReference>
<dbReference type="CDD" id="cd00109">
    <property type="entry name" value="Kunitz-type"/>
    <property type="match status" value="1"/>
</dbReference>
<dbReference type="FunFam" id="4.10.410.10:FF:000004">
    <property type="entry name" value="Tissue factor pathway inhibitor"/>
    <property type="match status" value="1"/>
</dbReference>
<dbReference type="Gene3D" id="4.10.410.10">
    <property type="entry name" value="Pancreatic trypsin inhibitor Kunitz domain"/>
    <property type="match status" value="1"/>
</dbReference>
<dbReference type="InterPro" id="IPR002223">
    <property type="entry name" value="Kunitz_BPTI"/>
</dbReference>
<dbReference type="InterPro" id="IPR036880">
    <property type="entry name" value="Kunitz_BPTI_sf"/>
</dbReference>
<dbReference type="InterPro" id="IPR050098">
    <property type="entry name" value="TFPI/VKTCI-like"/>
</dbReference>
<dbReference type="PANTHER" id="PTHR10083:SF374">
    <property type="entry name" value="BPTI_KUNITZ INHIBITOR DOMAIN-CONTAINING PROTEIN"/>
    <property type="match status" value="1"/>
</dbReference>
<dbReference type="PANTHER" id="PTHR10083">
    <property type="entry name" value="KUNITZ-TYPE PROTEASE INHIBITOR-RELATED"/>
    <property type="match status" value="1"/>
</dbReference>
<dbReference type="Pfam" id="PF00014">
    <property type="entry name" value="Kunitz_BPTI"/>
    <property type="match status" value="1"/>
</dbReference>
<dbReference type="PRINTS" id="PR00759">
    <property type="entry name" value="BASICPTASE"/>
</dbReference>
<dbReference type="SMART" id="SM00131">
    <property type="entry name" value="KU"/>
    <property type="match status" value="1"/>
</dbReference>
<dbReference type="SUPFAM" id="SSF57362">
    <property type="entry name" value="BPTI-like"/>
    <property type="match status" value="1"/>
</dbReference>
<dbReference type="PROSITE" id="PS50279">
    <property type="entry name" value="BPTI_KUNITZ_2"/>
    <property type="match status" value="1"/>
</dbReference>
<keyword id="KW-1015">Disulfide bond</keyword>
<keyword id="KW-0646">Protease inhibitor</keyword>
<keyword id="KW-0964">Secreted</keyword>
<keyword id="KW-0722">Serine protease inhibitor</keyword>
<keyword id="KW-0732">Signal</keyword>
<keyword id="KW-0800">Toxin</keyword>
<comment type="subcellular location">
    <subcellularLocation>
        <location evidence="6">Secreted</location>
    </subcellularLocation>
</comment>
<comment type="tissue specificity">
    <text evidence="6">Expressed by the venom duct.</text>
</comment>
<comment type="domain">
    <text>The cysteine framework is IX (C-C-C-C-C-C).</text>
</comment>
<comment type="similarity">
    <text evidence="5">Belongs to the venom Kunitz-type family.</text>
</comment>
<proteinExistence type="inferred from homology"/>
<sequence length="78" mass="8649">MTFLLLLVSVCMMATGEERTKRDVCELPFEEGPCFAAIRVYAYNAETGDCEQLTYGGCEGNGNRFATLEDCDNACARY</sequence>